<accession>Q867B7</accession>
<reference key="1">
    <citation type="journal article" date="2003" name="Vet. Immunol. Immunopathol.">
        <title>Canine hepatocyte growth factor: molecular cloning and characterization of the recombinant protein.</title>
        <authorList>
            <person name="Miyake M."/>
            <person name="Saze K."/>
            <person name="Yaguchi T."/>
            <person name="Wang J."/>
            <person name="Suzuta Y."/>
            <person name="Haga Y."/>
            <person name="Takahashi S.Y."/>
            <person name="Yamamoto Y."/>
            <person name="Iwabuchi S."/>
        </authorList>
    </citation>
    <scope>NUCLEOTIDE SEQUENCE [MRNA]</scope>
    <source>
        <strain>Beagle</strain>
    </source>
</reference>
<reference key="2">
    <citation type="submission" date="2004-02" db="EMBL/GenBank/DDBJ databases">
        <title>Characterization of the receptor tyrosine kinase Met and its autocrine loop in canine osteosarcoma cell lines.</title>
        <authorList>
            <person name="Liao A.T."/>
            <person name="Chien M.B."/>
            <person name="London C.A."/>
        </authorList>
    </citation>
    <scope>NUCLEOTIDE SEQUENCE [MRNA]</scope>
</reference>
<protein>
    <recommendedName>
        <fullName>Hepatocyte growth factor</fullName>
    </recommendedName>
    <alternativeName>
        <fullName>Hepatopoietin-A</fullName>
    </alternativeName>
    <alternativeName>
        <fullName>Scatter factor</fullName>
        <shortName>SF</shortName>
    </alternativeName>
    <component>
        <recommendedName>
            <fullName>Hepatocyte growth factor alpha chain</fullName>
        </recommendedName>
    </component>
    <component>
        <recommendedName>
            <fullName>Hepatocyte growth factor beta chain</fullName>
        </recommendedName>
    </component>
</protein>
<keyword id="KW-1015">Disulfide bond</keyword>
<keyword id="KW-0325">Glycoprotein</keyword>
<keyword id="KW-0339">Growth factor</keyword>
<keyword id="KW-0420">Kringle</keyword>
<keyword id="KW-0873">Pyrrolidone carboxylic acid</keyword>
<keyword id="KW-1185">Reference proteome</keyword>
<keyword id="KW-0677">Repeat</keyword>
<keyword id="KW-0721">Serine protease homolog</keyword>
<keyword id="KW-0732">Signal</keyword>
<name>HGF_CANLF</name>
<gene>
    <name type="primary">HGF</name>
</gene>
<comment type="function">
    <text evidence="2">Potent mitogen for mature parenchymal hepatocyte cells, seems to be a hepatotrophic factor, and acts as a growth factor for a broad spectrum of tissues and cell types (By similarity). Activating ligand for the receptor tyrosine kinase MET by binding to it and promoting its dimerization (By similarity). Activates MAPK signaling following TMPRSS13 cleavage and activation (By similarity).</text>
</comment>
<comment type="subunit">
    <text evidence="1">Dimer of an alpha chain and a beta chain linked by a disulfide bond. Interacts with SRPX2; the interaction increases HGF mitogenic activity (By similarity).</text>
</comment>
<comment type="PTM">
    <text evidence="2">The single-chain precursor undergoes proteolytic processing by TMPRSS13 resulting in an active two-chain form. The single-chain precursor undergoes proteolytic processing by HGFAC resulting in an active two-chain form.</text>
</comment>
<comment type="similarity">
    <text evidence="5">Belongs to the peptidase S1 family. Plasminogen subfamily.</text>
</comment>
<comment type="caution">
    <text evidence="7">Has lost two of the three essential catalytic residues and so probably has no enzymatic activity.</text>
</comment>
<dbReference type="EMBL" id="AB090353">
    <property type="protein sequence ID" value="BAC57560.1"/>
    <property type="molecule type" value="mRNA"/>
</dbReference>
<dbReference type="EMBL" id="AY543632">
    <property type="protein sequence ID" value="AAS48570.1"/>
    <property type="molecule type" value="mRNA"/>
</dbReference>
<dbReference type="RefSeq" id="NP_001002964.1">
    <property type="nucleotide sequence ID" value="NM_001002964.1"/>
</dbReference>
<dbReference type="SMR" id="Q867B7"/>
<dbReference type="FunCoup" id="Q867B7">
    <property type="interactions" value="302"/>
</dbReference>
<dbReference type="STRING" id="9615.ENSCAFP00000009539"/>
<dbReference type="MEROPS" id="S01.976"/>
<dbReference type="GlyCosmos" id="Q867B7">
    <property type="glycosylation" value="4 sites, No reported glycans"/>
</dbReference>
<dbReference type="PaxDb" id="9612-ENSCAFP00000009539"/>
<dbReference type="Ensembl" id="ENSCAFT00000010288.5">
    <property type="protein sequence ID" value="ENSCAFP00000009539.3"/>
    <property type="gene ID" value="ENSCAFG00000006370.5"/>
</dbReference>
<dbReference type="Ensembl" id="ENSCAFT00030017776.1">
    <property type="protein sequence ID" value="ENSCAFP00030015521.1"/>
    <property type="gene ID" value="ENSCAFG00030009302.1"/>
</dbReference>
<dbReference type="Ensembl" id="ENSCAFT00040036906.1">
    <property type="protein sequence ID" value="ENSCAFP00040032140.1"/>
    <property type="gene ID" value="ENSCAFG00040019820.1"/>
</dbReference>
<dbReference type="Ensembl" id="ENSCAFT00845046191.1">
    <property type="protein sequence ID" value="ENSCAFP00845036270.1"/>
    <property type="gene ID" value="ENSCAFG00845025968.1"/>
</dbReference>
<dbReference type="GeneID" id="403441"/>
<dbReference type="KEGG" id="cfa:403441"/>
<dbReference type="CTD" id="3082"/>
<dbReference type="VEuPathDB" id="HostDB:ENSCAFG00845025968"/>
<dbReference type="VGNC" id="VGNC:41674">
    <property type="gene designation" value="HGF"/>
</dbReference>
<dbReference type="eggNOG" id="ENOG502QR40">
    <property type="taxonomic scope" value="Eukaryota"/>
</dbReference>
<dbReference type="GeneTree" id="ENSGT00940000156019"/>
<dbReference type="HOGENOM" id="CLU_017565_1_0_1"/>
<dbReference type="InParanoid" id="Q867B7"/>
<dbReference type="OMA" id="CNIKVCE"/>
<dbReference type="OrthoDB" id="41905at2759"/>
<dbReference type="TreeFam" id="TF329901"/>
<dbReference type="Reactome" id="R-CFA-114608">
    <property type="pathway name" value="Platelet degranulation"/>
</dbReference>
<dbReference type="Reactome" id="R-CFA-1257604">
    <property type="pathway name" value="PIP3 activates AKT signaling"/>
</dbReference>
<dbReference type="Reactome" id="R-CFA-5673001">
    <property type="pathway name" value="RAF/MAP kinase cascade"/>
</dbReference>
<dbReference type="Reactome" id="R-CFA-6806942">
    <property type="pathway name" value="MET Receptor Activation"/>
</dbReference>
<dbReference type="Reactome" id="R-CFA-6807004">
    <property type="pathway name" value="Negative regulation of MET activity"/>
</dbReference>
<dbReference type="Reactome" id="R-CFA-6811558">
    <property type="pathway name" value="PI5P, PP2A and IER3 Regulate PI3K/AKT Signaling"/>
</dbReference>
<dbReference type="Reactome" id="R-CFA-8851805">
    <property type="pathway name" value="MET activates RAS signaling"/>
</dbReference>
<dbReference type="Reactome" id="R-CFA-8851907">
    <property type="pathway name" value="MET activates PI3K/AKT signaling"/>
</dbReference>
<dbReference type="Reactome" id="R-CFA-8865999">
    <property type="pathway name" value="MET activates PTPN11"/>
</dbReference>
<dbReference type="Reactome" id="R-CFA-8874081">
    <property type="pathway name" value="MET activates PTK2 signaling"/>
</dbReference>
<dbReference type="Reactome" id="R-CFA-8875513">
    <property type="pathway name" value="MET interacts with TNS proteins"/>
</dbReference>
<dbReference type="Reactome" id="R-CFA-8875555">
    <property type="pathway name" value="MET activates RAP1 and RAC1"/>
</dbReference>
<dbReference type="Reactome" id="R-CFA-8875656">
    <property type="pathway name" value="MET receptor recycling"/>
</dbReference>
<dbReference type="Reactome" id="R-CFA-8875791">
    <property type="pathway name" value="MET activates STAT3"/>
</dbReference>
<dbReference type="Reactome" id="R-CFA-9734091">
    <property type="pathway name" value="Drug-mediated inhibition of MET activation"/>
</dbReference>
<dbReference type="Proteomes" id="UP000002254">
    <property type="component" value="Chromosome 18"/>
</dbReference>
<dbReference type="Proteomes" id="UP000694429">
    <property type="component" value="Chromosome 18"/>
</dbReference>
<dbReference type="Proteomes" id="UP000694542">
    <property type="component" value="Chromosome 18"/>
</dbReference>
<dbReference type="Proteomes" id="UP000805418">
    <property type="component" value="Chromosome 18"/>
</dbReference>
<dbReference type="Bgee" id="ENSCAFG00000006370">
    <property type="expression patterns" value="Expressed in metanephros cortex and 42 other cell types or tissues"/>
</dbReference>
<dbReference type="GO" id="GO:0005615">
    <property type="term" value="C:extracellular space"/>
    <property type="evidence" value="ECO:0000318"/>
    <property type="project" value="GO_Central"/>
</dbReference>
<dbReference type="GO" id="GO:0042056">
    <property type="term" value="F:chemoattractant activity"/>
    <property type="evidence" value="ECO:0007669"/>
    <property type="project" value="Ensembl"/>
</dbReference>
<dbReference type="GO" id="GO:0008083">
    <property type="term" value="F:growth factor activity"/>
    <property type="evidence" value="ECO:0007669"/>
    <property type="project" value="UniProtKB-KW"/>
</dbReference>
<dbReference type="GO" id="GO:0042802">
    <property type="term" value="F:identical protein binding"/>
    <property type="evidence" value="ECO:0007669"/>
    <property type="project" value="Ensembl"/>
</dbReference>
<dbReference type="GO" id="GO:0005102">
    <property type="term" value="F:signaling receptor binding"/>
    <property type="evidence" value="ECO:0000318"/>
    <property type="project" value="GO_Central"/>
</dbReference>
<dbReference type="GO" id="GO:0060326">
    <property type="term" value="P:cell chemotaxis"/>
    <property type="evidence" value="ECO:0007669"/>
    <property type="project" value="Ensembl"/>
</dbReference>
<dbReference type="GO" id="GO:0000902">
    <property type="term" value="P:cell morphogenesis"/>
    <property type="evidence" value="ECO:0007669"/>
    <property type="project" value="Ensembl"/>
</dbReference>
<dbReference type="GO" id="GO:0035729">
    <property type="term" value="P:cellular response to hepatocyte growth factor stimulus"/>
    <property type="evidence" value="ECO:0007669"/>
    <property type="project" value="Ensembl"/>
</dbReference>
<dbReference type="GO" id="GO:0050673">
    <property type="term" value="P:epithelial cell proliferation"/>
    <property type="evidence" value="ECO:0007669"/>
    <property type="project" value="Ensembl"/>
</dbReference>
<dbReference type="GO" id="GO:0048012">
    <property type="term" value="P:hepatocyte growth factor receptor signaling pathway"/>
    <property type="evidence" value="ECO:0000318"/>
    <property type="project" value="GO_Central"/>
</dbReference>
<dbReference type="GO" id="GO:0001889">
    <property type="term" value="P:liver development"/>
    <property type="evidence" value="ECO:0007669"/>
    <property type="project" value="Ensembl"/>
</dbReference>
<dbReference type="GO" id="GO:0051450">
    <property type="term" value="P:myoblast proliferation"/>
    <property type="evidence" value="ECO:0007669"/>
    <property type="project" value="Ensembl"/>
</dbReference>
<dbReference type="GO" id="GO:0043066">
    <property type="term" value="P:negative regulation of apoptotic process"/>
    <property type="evidence" value="ECO:0000318"/>
    <property type="project" value="GO_Central"/>
</dbReference>
<dbReference type="GO" id="GO:1902042">
    <property type="term" value="P:negative regulation of extrinsic apoptotic signaling pathway via death domain receptors"/>
    <property type="evidence" value="ECO:0007669"/>
    <property type="project" value="Ensembl"/>
</dbReference>
<dbReference type="GO" id="GO:1901299">
    <property type="term" value="P:negative regulation of hydrogen peroxide-mediated programmed cell death"/>
    <property type="evidence" value="ECO:0007669"/>
    <property type="project" value="Ensembl"/>
</dbReference>
<dbReference type="GO" id="GO:0050728">
    <property type="term" value="P:negative regulation of inflammatory response"/>
    <property type="evidence" value="ECO:0007669"/>
    <property type="project" value="Ensembl"/>
</dbReference>
<dbReference type="GO" id="GO:0032715">
    <property type="term" value="P:negative regulation of interleukin-6 production"/>
    <property type="evidence" value="ECO:0007669"/>
    <property type="project" value="Ensembl"/>
</dbReference>
<dbReference type="GO" id="GO:0090201">
    <property type="term" value="P:negative regulation of release of cytochrome c from mitochondria"/>
    <property type="evidence" value="ECO:0007669"/>
    <property type="project" value="Ensembl"/>
</dbReference>
<dbReference type="GO" id="GO:0030335">
    <property type="term" value="P:positive regulation of cell migration"/>
    <property type="evidence" value="ECO:0007669"/>
    <property type="project" value="Ensembl"/>
</dbReference>
<dbReference type="GO" id="GO:2000573">
    <property type="term" value="P:positive regulation of DNA biosynthetic process"/>
    <property type="evidence" value="ECO:0007669"/>
    <property type="project" value="Ensembl"/>
</dbReference>
<dbReference type="GO" id="GO:0032733">
    <property type="term" value="P:positive regulation of interleukin-10 production"/>
    <property type="evidence" value="ECO:0007669"/>
    <property type="project" value="Ensembl"/>
</dbReference>
<dbReference type="GO" id="GO:0043410">
    <property type="term" value="P:positive regulation of MAPK cascade"/>
    <property type="evidence" value="ECO:0007669"/>
    <property type="project" value="Ensembl"/>
</dbReference>
<dbReference type="GO" id="GO:0051897">
    <property type="term" value="P:positive regulation of phosphatidylinositol 3-kinase/protein kinase B signal transduction"/>
    <property type="evidence" value="ECO:0007669"/>
    <property type="project" value="Ensembl"/>
</dbReference>
<dbReference type="GO" id="GO:0006508">
    <property type="term" value="P:proteolysis"/>
    <property type="evidence" value="ECO:0007669"/>
    <property type="project" value="InterPro"/>
</dbReference>
<dbReference type="GO" id="GO:0060665">
    <property type="term" value="P:regulation of branching involved in salivary gland morphogenesis by mesenchymal-epithelial signaling"/>
    <property type="evidence" value="ECO:0007669"/>
    <property type="project" value="Ensembl"/>
</dbReference>
<dbReference type="GO" id="GO:1900744">
    <property type="term" value="P:regulation of p38MAPK cascade"/>
    <property type="evidence" value="ECO:0007669"/>
    <property type="project" value="Ensembl"/>
</dbReference>
<dbReference type="GO" id="GO:0014856">
    <property type="term" value="P:skeletal muscle cell proliferation"/>
    <property type="evidence" value="ECO:0007669"/>
    <property type="project" value="Ensembl"/>
</dbReference>
<dbReference type="CDD" id="cd00108">
    <property type="entry name" value="KR"/>
    <property type="match status" value="4"/>
</dbReference>
<dbReference type="CDD" id="cd00129">
    <property type="entry name" value="PAN_APPLE"/>
    <property type="match status" value="1"/>
</dbReference>
<dbReference type="CDD" id="cd00190">
    <property type="entry name" value="Tryp_SPc"/>
    <property type="match status" value="1"/>
</dbReference>
<dbReference type="FunFam" id="2.40.10.10:FF:000023">
    <property type="entry name" value="Hepatocyte growth factor"/>
    <property type="match status" value="1"/>
</dbReference>
<dbReference type="FunFam" id="2.40.10.10:FF:000026">
    <property type="entry name" value="Hepatocyte growth factor"/>
    <property type="match status" value="1"/>
</dbReference>
<dbReference type="FunFam" id="2.40.20.10:FF:000004">
    <property type="entry name" value="Hepatocyte growth factor"/>
    <property type="match status" value="1"/>
</dbReference>
<dbReference type="FunFam" id="2.40.20.10:FF:000007">
    <property type="entry name" value="Hepatocyte growth factor"/>
    <property type="match status" value="1"/>
</dbReference>
<dbReference type="FunFam" id="2.40.20.10:FF:000008">
    <property type="entry name" value="Hepatocyte growth factor"/>
    <property type="match status" value="1"/>
</dbReference>
<dbReference type="FunFam" id="2.40.20.10:FF:000047">
    <property type="entry name" value="Hepatocyte growth factor"/>
    <property type="match status" value="1"/>
</dbReference>
<dbReference type="FunFam" id="3.50.4.10:FF:000003">
    <property type="entry name" value="Hepatocyte growth factor"/>
    <property type="match status" value="1"/>
</dbReference>
<dbReference type="Gene3D" id="3.50.4.10">
    <property type="entry name" value="Hepatocyte Growth Factor"/>
    <property type="match status" value="1"/>
</dbReference>
<dbReference type="Gene3D" id="2.40.20.10">
    <property type="entry name" value="Plasminogen Kringle 4"/>
    <property type="match status" value="4"/>
</dbReference>
<dbReference type="Gene3D" id="2.40.10.10">
    <property type="entry name" value="Trypsin-like serine proteases"/>
    <property type="match status" value="2"/>
</dbReference>
<dbReference type="InterPro" id="IPR027284">
    <property type="entry name" value="Hepatocyte_GF"/>
</dbReference>
<dbReference type="InterPro" id="IPR024174">
    <property type="entry name" value="HGF/MST1"/>
</dbReference>
<dbReference type="InterPro" id="IPR000001">
    <property type="entry name" value="Kringle"/>
</dbReference>
<dbReference type="InterPro" id="IPR013806">
    <property type="entry name" value="Kringle-like"/>
</dbReference>
<dbReference type="InterPro" id="IPR018056">
    <property type="entry name" value="Kringle_CS"/>
</dbReference>
<dbReference type="InterPro" id="IPR038178">
    <property type="entry name" value="Kringle_sf"/>
</dbReference>
<dbReference type="InterPro" id="IPR003609">
    <property type="entry name" value="Pan_app"/>
</dbReference>
<dbReference type="InterPro" id="IPR009003">
    <property type="entry name" value="Peptidase_S1_PA"/>
</dbReference>
<dbReference type="InterPro" id="IPR043504">
    <property type="entry name" value="Peptidase_S1_PA_chymotrypsin"/>
</dbReference>
<dbReference type="InterPro" id="IPR001314">
    <property type="entry name" value="Peptidase_S1A"/>
</dbReference>
<dbReference type="InterPro" id="IPR050759">
    <property type="entry name" value="Serine_protease_kringle"/>
</dbReference>
<dbReference type="InterPro" id="IPR001254">
    <property type="entry name" value="Trypsin_dom"/>
</dbReference>
<dbReference type="PANTHER" id="PTHR24261:SF8">
    <property type="entry name" value="HEPATOCYTE GROWTH FACTOR"/>
    <property type="match status" value="1"/>
</dbReference>
<dbReference type="PANTHER" id="PTHR24261">
    <property type="entry name" value="PLASMINOGEN-RELATED"/>
    <property type="match status" value="1"/>
</dbReference>
<dbReference type="Pfam" id="PF00051">
    <property type="entry name" value="Kringle"/>
    <property type="match status" value="4"/>
</dbReference>
<dbReference type="Pfam" id="PF00024">
    <property type="entry name" value="PAN_1"/>
    <property type="match status" value="1"/>
</dbReference>
<dbReference type="Pfam" id="PF00089">
    <property type="entry name" value="Trypsin"/>
    <property type="match status" value="1"/>
</dbReference>
<dbReference type="PIRSF" id="PIRSF500183">
    <property type="entry name" value="Hepatocyte_GF"/>
    <property type="match status" value="1"/>
</dbReference>
<dbReference type="PIRSF" id="PIRSF001152">
    <property type="entry name" value="HGF_MST1"/>
    <property type="match status" value="1"/>
</dbReference>
<dbReference type="PRINTS" id="PR00722">
    <property type="entry name" value="CHYMOTRYPSIN"/>
</dbReference>
<dbReference type="PRINTS" id="PR00018">
    <property type="entry name" value="KRINGLE"/>
</dbReference>
<dbReference type="SMART" id="SM00130">
    <property type="entry name" value="KR"/>
    <property type="match status" value="4"/>
</dbReference>
<dbReference type="SMART" id="SM00473">
    <property type="entry name" value="PAN_AP"/>
    <property type="match status" value="1"/>
</dbReference>
<dbReference type="SMART" id="SM00020">
    <property type="entry name" value="Tryp_SPc"/>
    <property type="match status" value="1"/>
</dbReference>
<dbReference type="SUPFAM" id="SSF57414">
    <property type="entry name" value="Hairpin loop containing domain-like"/>
    <property type="match status" value="1"/>
</dbReference>
<dbReference type="SUPFAM" id="SSF57440">
    <property type="entry name" value="Kringle-like"/>
    <property type="match status" value="4"/>
</dbReference>
<dbReference type="SUPFAM" id="SSF50494">
    <property type="entry name" value="Trypsin-like serine proteases"/>
    <property type="match status" value="1"/>
</dbReference>
<dbReference type="PROSITE" id="PS00021">
    <property type="entry name" value="KRINGLE_1"/>
    <property type="match status" value="4"/>
</dbReference>
<dbReference type="PROSITE" id="PS50070">
    <property type="entry name" value="KRINGLE_2"/>
    <property type="match status" value="4"/>
</dbReference>
<dbReference type="PROSITE" id="PS50948">
    <property type="entry name" value="PAN"/>
    <property type="match status" value="1"/>
</dbReference>
<dbReference type="PROSITE" id="PS50240">
    <property type="entry name" value="TRYPSIN_DOM"/>
    <property type="match status" value="1"/>
</dbReference>
<organism>
    <name type="scientific">Canis lupus familiaris</name>
    <name type="common">Dog</name>
    <name type="synonym">Canis familiaris</name>
    <dbReference type="NCBI Taxonomy" id="9615"/>
    <lineage>
        <taxon>Eukaryota</taxon>
        <taxon>Metazoa</taxon>
        <taxon>Chordata</taxon>
        <taxon>Craniata</taxon>
        <taxon>Vertebrata</taxon>
        <taxon>Euteleostomi</taxon>
        <taxon>Mammalia</taxon>
        <taxon>Eutheria</taxon>
        <taxon>Laurasiatheria</taxon>
        <taxon>Carnivora</taxon>
        <taxon>Caniformia</taxon>
        <taxon>Canidae</taxon>
        <taxon>Canis</taxon>
    </lineage>
</organism>
<sequence>MWVTKLLPLLVLQQLLLHLLLLPVAVPRAEGQKKRRNTLHEFKKSAKTTLIKEDPLLKIKTKKMNTADQCANRCIRNKGLPFTCKAFVFDKARKRCLWFPFNSMTSGVKKEFGHEFDLYENKDYIRNCIIGKGGSYKGTVSITKSGIKCQPWNSMIPHEHSFLPSSYRGKDLQENYCRNPRGEEGGPWCFTSNPEVRYEVCDIPQCSEVECMTCNGESYRGPMDHTESGKICQRWDHQTPHRHKFLPERYPDKGFDDNYCRNPDGKPRPWCYTLDPDTPWEYCAIKMCAHSTMNDTDVPMETTECIQGQGEGYRGTINTIWNGVPCQRWDSQYPHQHDITPENFKCKDLRENYCRNPDGAESPWCFTTDPNIRVGYCSQIPKCDVSSGQDCYRGNGKNYMGNLSKTRSGLTCSMWEKNMEDLHRHIFWEPDASKLNKNYCRNPDDDAHGPWCYTGNPLIPWDYCPIFRCEGDTTPTIVNLDHPVISCAKTKQLRVVNGIPTRTNVGWMVSLKYRNKHICGGSLIKESWILTARQCFPSRNRDLKDYEAWLGIHDVHGKGDEKRKQVLNVSQLVYGPEGSDLVLLKLARPAILDDFVSTIDLPNYGCTIPEKTTCSVYGWGYTGSINFDGLLRVAHLYIMGNEKCSQYHQGKVTLNESEICAGAENIVSGPCEGDYGGPLVCEQHKMRMVLGVIVPGRGCAIPNRPGIFVRVAYYAKWIHKIILTYKIQQS</sequence>
<feature type="signal peptide" evidence="1">
    <location>
        <begin position="1"/>
        <end position="31"/>
    </location>
</feature>
<feature type="chain" id="PRO_0000274199" description="Hepatocyte growth factor alpha chain">
    <location>
        <begin position="32"/>
        <end position="494"/>
    </location>
</feature>
<feature type="chain" id="PRO_0000274200" description="Hepatocyte growth factor beta chain">
    <location>
        <begin position="495"/>
        <end position="730"/>
    </location>
</feature>
<feature type="domain" description="PAN" evidence="6">
    <location>
        <begin position="37"/>
        <end position="123"/>
    </location>
</feature>
<feature type="domain" description="Kringle 1" evidence="4">
    <location>
        <begin position="128"/>
        <end position="206"/>
    </location>
</feature>
<feature type="domain" description="Kringle 2" evidence="4">
    <location>
        <begin position="211"/>
        <end position="288"/>
    </location>
</feature>
<feature type="domain" description="Kringle 3" evidence="4">
    <location>
        <begin position="305"/>
        <end position="383"/>
    </location>
</feature>
<feature type="domain" description="Kringle 4" evidence="4">
    <location>
        <begin position="391"/>
        <end position="469"/>
    </location>
</feature>
<feature type="domain" description="Peptidase S1" evidence="5">
    <location>
        <begin position="495"/>
        <end position="723"/>
    </location>
</feature>
<feature type="modified residue" description="Pyrrolidone carboxylic acid" evidence="2">
    <location>
        <position position="32"/>
    </location>
</feature>
<feature type="glycosylation site" description="N-linked (GlcNAc...) asparagine" evidence="3">
    <location>
        <position position="294"/>
    </location>
</feature>
<feature type="glycosylation site" description="N-linked (GlcNAc...) asparagine" evidence="3">
    <location>
        <position position="402"/>
    </location>
</feature>
<feature type="glycosylation site" description="N-linked (GlcNAc...) asparagine" evidence="3">
    <location>
        <position position="568"/>
    </location>
</feature>
<feature type="glycosylation site" description="N-linked (GlcNAc...) asparagine" evidence="3">
    <location>
        <position position="655"/>
    </location>
</feature>
<feature type="disulfide bond" evidence="1">
    <location>
        <begin position="70"/>
        <end position="96"/>
    </location>
</feature>
<feature type="disulfide bond" evidence="1">
    <location>
        <begin position="74"/>
        <end position="84"/>
    </location>
</feature>
<feature type="disulfide bond" evidence="1">
    <location>
        <begin position="128"/>
        <end position="206"/>
    </location>
</feature>
<feature type="disulfide bond" evidence="1">
    <location>
        <begin position="149"/>
        <end position="189"/>
    </location>
</feature>
<feature type="disulfide bond" evidence="1">
    <location>
        <begin position="177"/>
        <end position="201"/>
    </location>
</feature>
<feature type="disulfide bond" evidence="1">
    <location>
        <begin position="211"/>
        <end position="288"/>
    </location>
</feature>
<feature type="disulfide bond" evidence="1">
    <location>
        <begin position="232"/>
        <end position="271"/>
    </location>
</feature>
<feature type="disulfide bond" evidence="1">
    <location>
        <begin position="260"/>
        <end position="283"/>
    </location>
</feature>
<feature type="disulfide bond" evidence="1">
    <location>
        <begin position="305"/>
        <end position="383"/>
    </location>
</feature>
<feature type="disulfide bond" evidence="1">
    <location>
        <begin position="326"/>
        <end position="365"/>
    </location>
</feature>
<feature type="disulfide bond" evidence="1">
    <location>
        <begin position="354"/>
        <end position="377"/>
    </location>
</feature>
<feature type="disulfide bond" evidence="1">
    <location>
        <begin position="391"/>
        <end position="469"/>
    </location>
</feature>
<feature type="disulfide bond" evidence="1">
    <location>
        <begin position="412"/>
        <end position="452"/>
    </location>
</feature>
<feature type="disulfide bond" evidence="1">
    <location>
        <begin position="440"/>
        <end position="464"/>
    </location>
</feature>
<feature type="disulfide bond" description="Interchain (between alpha and beta chains)" evidence="4 5 6">
    <location>
        <begin position="487"/>
        <end position="606"/>
    </location>
</feature>
<feature type="disulfide bond" evidence="1">
    <location>
        <begin position="519"/>
        <end position="535"/>
    </location>
</feature>
<feature type="disulfide bond" evidence="1">
    <location>
        <begin position="614"/>
        <end position="681"/>
    </location>
</feature>
<feature type="disulfide bond" evidence="1">
    <location>
        <begin position="644"/>
        <end position="660"/>
    </location>
</feature>
<feature type="disulfide bond" evidence="1">
    <location>
        <begin position="671"/>
        <end position="699"/>
    </location>
</feature>
<proteinExistence type="evidence at transcript level"/>
<evidence type="ECO:0000250" key="1"/>
<evidence type="ECO:0000250" key="2">
    <source>
        <dbReference type="UniProtKB" id="P14210"/>
    </source>
</evidence>
<evidence type="ECO:0000255" key="3"/>
<evidence type="ECO:0000255" key="4">
    <source>
        <dbReference type="PROSITE-ProRule" id="PRU00121"/>
    </source>
</evidence>
<evidence type="ECO:0000255" key="5">
    <source>
        <dbReference type="PROSITE-ProRule" id="PRU00274"/>
    </source>
</evidence>
<evidence type="ECO:0000255" key="6">
    <source>
        <dbReference type="PROSITE-ProRule" id="PRU00315"/>
    </source>
</evidence>
<evidence type="ECO:0000305" key="7"/>